<protein>
    <recommendedName>
        <fullName evidence="5">DNA-binding dual transcriptional regulator Rns</fullName>
    </recommendedName>
    <alternativeName>
        <fullName evidence="4">Regulatory protein Rns</fullName>
    </alternativeName>
</protein>
<geneLocation type="plasmid">
    <name>pCS200</name>
</geneLocation>
<keyword id="KW-0002">3D-structure</keyword>
<keyword id="KW-0010">Activator</keyword>
<keyword id="KW-0963">Cytoplasm</keyword>
<keyword id="KW-0238">DNA-binding</keyword>
<keyword id="KW-0449">Lipoprotein</keyword>
<keyword id="KW-0614">Plasmid</keyword>
<keyword id="KW-0678">Repressor</keyword>
<keyword id="KW-0804">Transcription</keyword>
<keyword id="KW-0805">Transcription regulation</keyword>
<keyword id="KW-0843">Virulence</keyword>
<reference key="1">
    <citation type="journal article" date="1989" name="Proc. Natl. Acad. Sci. U.S.A.">
        <title>A plasmid-encoded regulatory gene, rns, required for expression of the CS1 and CS2 adhesins of enterotoxigenic Escherichia coli.</title>
        <authorList>
            <person name="Caron J."/>
            <person name="Coffield L.M."/>
            <person name="Scott J.R."/>
        </authorList>
    </citation>
    <scope>NUCLEOTIDE SEQUENCE [GENOMIC DNA]</scope>
    <scope>FUNCTION</scope>
    <scope>DISRUPTION PHENOTYPE</scope>
    <source>
        <strain>O6:K15:H16 / ETEC</strain>
        <plasmid>pCS200</plasmid>
    </source>
</reference>
<reference evidence="6 7" key="2">
    <citation type="journal article" date="2021" name="Sci. Rep.">
        <title>Structure of the master regulator Rns reveals an inhibitor of enterotoxigenic Escherichia coli virulence regulons.</title>
        <authorList>
            <person name="Midgett C.R."/>
            <person name="Talbot K.M."/>
            <person name="Day J.L."/>
            <person name="Munson G.P."/>
            <person name="Kull F.J."/>
        </authorList>
    </citation>
    <scope>X-RAY CRYSTALLOGRAPHY (2.80 ANGSTROMS)</scope>
    <scope>FUNCTION</scope>
    <scope>ACTIVITY REGULATION</scope>
    <scope>SUBUNIT</scope>
    <scope>FATTY ACID-BINDING</scope>
    <scope>DOMAIN</scope>
</reference>
<comment type="function">
    <text evidence="2 3">A transcription factor required for the expression of the CS1 and CS2 adhesins of enterotoxigenic E.coli (PubMed:2563591). Required for expression of pilins and some outer membrane lipoproteins (PubMed:34341412). Represses expression of nlpA (PubMed:34341412).</text>
</comment>
<comment type="activity regulation">
    <text evidence="3">Rns-dependent expression of pilins and outer membrane proteins CexE-alpha and CexE-epsilon are inhibited in vivo by decanoic acid (decanoate); has no effect on expression of DnaK or flagellins (PubMed:34341412). Decanoate relieves Rns-dependent repression of nlpA (PubMed:34341412).</text>
</comment>
<comment type="subunit">
    <text evidence="3">Homodimer; each subunit binds one decanoate molecule.</text>
</comment>
<comment type="subcellular location">
    <subcellularLocation>
        <location evidence="5">Cytoplasm</location>
    </subcellularLocation>
</comment>
<comment type="domain">
    <text evidence="3">Has been crystallized in an open and closed form; both bind decanoate which changes position between the 2 forms.</text>
</comment>
<comment type="disruption phenotype">
    <text evidence="2">No longer expresses CS1 or CS2.</text>
</comment>
<proteinExistence type="evidence at protein level"/>
<name>RNS_ECOLX</name>
<evidence type="ECO:0000255" key="1">
    <source>
        <dbReference type="PROSITE-ProRule" id="PRU00593"/>
    </source>
</evidence>
<evidence type="ECO:0000269" key="2">
    <source>
    </source>
</evidence>
<evidence type="ECO:0000269" key="3">
    <source>
    </source>
</evidence>
<evidence type="ECO:0000303" key="4">
    <source>
    </source>
</evidence>
<evidence type="ECO:0000305" key="5"/>
<evidence type="ECO:0007744" key="6">
    <source>
        <dbReference type="PDB" id="6XIU"/>
    </source>
</evidence>
<evidence type="ECO:0007744" key="7">
    <source>
        <dbReference type="PDB" id="6XIV"/>
    </source>
</evidence>
<evidence type="ECO:0007829" key="8">
    <source>
        <dbReference type="PDB" id="6XIU"/>
    </source>
</evidence>
<evidence type="ECO:0007829" key="9">
    <source>
        <dbReference type="PDB" id="6XIV"/>
    </source>
</evidence>
<feature type="chain" id="PRO_0000194576" description="DNA-binding dual transcriptional regulator Rns">
    <location>
        <begin position="1"/>
        <end position="265"/>
    </location>
</feature>
<feature type="domain" description="HTH araC/xylS-type" evidence="1">
    <location>
        <begin position="164"/>
        <end position="261"/>
    </location>
</feature>
<feature type="DNA-binding region" description="H-T-H motif" evidence="1">
    <location>
        <begin position="181"/>
        <end position="202"/>
    </location>
</feature>
<feature type="DNA-binding region" description="H-T-H motif" evidence="1">
    <location>
        <begin position="228"/>
        <end position="251"/>
    </location>
</feature>
<feature type="binding site" evidence="3 6 7">
    <location>
        <position position="20"/>
    </location>
    <ligand>
        <name>decanoate</name>
        <dbReference type="ChEBI" id="CHEBI:27689"/>
    </ligand>
</feature>
<feature type="binding site" evidence="3 6 7">
    <location>
        <position position="75"/>
    </location>
    <ligand>
        <name>decanoate</name>
        <dbReference type="ChEBI" id="CHEBI:27689"/>
    </ligand>
</feature>
<feature type="helix" evidence="9">
    <location>
        <begin position="6"/>
        <end position="8"/>
    </location>
</feature>
<feature type="strand" evidence="9">
    <location>
        <begin position="11"/>
        <end position="18"/>
    </location>
</feature>
<feature type="strand" evidence="9">
    <location>
        <begin position="23"/>
        <end position="26"/>
    </location>
</feature>
<feature type="strand" evidence="9">
    <location>
        <begin position="28"/>
        <end position="38"/>
    </location>
</feature>
<feature type="strand" evidence="9">
    <location>
        <begin position="41"/>
        <end position="43"/>
    </location>
</feature>
<feature type="strand" evidence="9">
    <location>
        <begin position="48"/>
        <end position="51"/>
    </location>
</feature>
<feature type="strand" evidence="9">
    <location>
        <begin position="56"/>
        <end position="65"/>
    </location>
</feature>
<feature type="strand" evidence="9">
    <location>
        <begin position="72"/>
        <end position="75"/>
    </location>
</feature>
<feature type="helix" evidence="9">
    <location>
        <begin position="78"/>
        <end position="92"/>
    </location>
</feature>
<feature type="helix" evidence="9">
    <location>
        <begin position="105"/>
        <end position="107"/>
    </location>
</feature>
<feature type="strand" evidence="9">
    <location>
        <begin position="109"/>
        <end position="112"/>
    </location>
</feature>
<feature type="helix" evidence="9">
    <location>
        <begin position="116"/>
        <end position="123"/>
    </location>
</feature>
<feature type="helix" evidence="9">
    <location>
        <begin position="130"/>
        <end position="142"/>
    </location>
</feature>
<feature type="turn" evidence="9">
    <location>
        <begin position="145"/>
        <end position="147"/>
    </location>
</feature>
<feature type="helix" evidence="9">
    <location>
        <begin position="148"/>
        <end position="156"/>
    </location>
</feature>
<feature type="helix" evidence="9">
    <location>
        <begin position="162"/>
        <end position="170"/>
    </location>
</feature>
<feature type="turn" evidence="8">
    <location>
        <begin position="172"/>
        <end position="175"/>
    </location>
</feature>
<feature type="helix" evidence="9">
    <location>
        <begin position="180"/>
        <end position="186"/>
    </location>
</feature>
<feature type="helix" evidence="9">
    <location>
        <begin position="191"/>
        <end position="199"/>
    </location>
</feature>
<feature type="turn" evidence="9">
    <location>
        <begin position="200"/>
        <end position="202"/>
    </location>
</feature>
<feature type="helix" evidence="9">
    <location>
        <begin position="205"/>
        <end position="223"/>
    </location>
</feature>
<feature type="helix" evidence="9">
    <location>
        <begin position="228"/>
        <end position="235"/>
    </location>
</feature>
<feature type="helix" evidence="9">
    <location>
        <begin position="240"/>
        <end position="251"/>
    </location>
</feature>
<feature type="helix" evidence="9">
    <location>
        <begin position="255"/>
        <end position="262"/>
    </location>
</feature>
<organism>
    <name type="scientific">Escherichia coli</name>
    <dbReference type="NCBI Taxonomy" id="562"/>
    <lineage>
        <taxon>Bacteria</taxon>
        <taxon>Pseudomonadati</taxon>
        <taxon>Pseudomonadota</taxon>
        <taxon>Gammaproteobacteria</taxon>
        <taxon>Enterobacterales</taxon>
        <taxon>Enterobacteriaceae</taxon>
        <taxon>Escherichia</taxon>
    </lineage>
</organism>
<accession>P16114</accession>
<gene>
    <name evidence="4" type="primary">rns</name>
</gene>
<sequence>MDFKYTEEKETIKINNIMIHKYTVLYTSNCIMDIYSEEEKITCFSNRLVFLERGVNISVRMQKQILSEKPYVAFRLNGDMLRHLKDALMIIYGMSKIDTNACRSMSRKIMTTEVNKTLLDELKNINSHDNSAFISSLIYLISKLENNEKIIESIYISSVSFFSDKVRNLIEKDLSRKWTLGIIADAFNASEITIRKRLESENTNFNQILMQLRMSKAALLLLENSYQISQISNMIGISSASYFIRIFNKHYGVTPKQFFTYFKGG</sequence>
<dbReference type="EMBL" id="J04166">
    <property type="protein sequence ID" value="AAA24419.1"/>
    <property type="molecule type" value="Genomic_DNA"/>
</dbReference>
<dbReference type="PIR" id="A31457">
    <property type="entry name" value="A31457"/>
</dbReference>
<dbReference type="PDB" id="6XIU">
    <property type="method" value="X-ray"/>
    <property type="resolution" value="3.00 A"/>
    <property type="chains" value="A/B=1-265"/>
</dbReference>
<dbReference type="PDB" id="6XIV">
    <property type="method" value="X-ray"/>
    <property type="resolution" value="2.80 A"/>
    <property type="chains" value="A/B=1-265"/>
</dbReference>
<dbReference type="PDBsum" id="6XIU"/>
<dbReference type="PDBsum" id="6XIV"/>
<dbReference type="SMR" id="P16114"/>
<dbReference type="PATRIC" id="fig|562.7075.peg.4897"/>
<dbReference type="GO" id="GO:0005737">
    <property type="term" value="C:cytoplasm"/>
    <property type="evidence" value="ECO:0007669"/>
    <property type="project" value="UniProtKB-SubCell"/>
</dbReference>
<dbReference type="GO" id="GO:0003700">
    <property type="term" value="F:DNA-binding transcription factor activity"/>
    <property type="evidence" value="ECO:0007669"/>
    <property type="project" value="InterPro"/>
</dbReference>
<dbReference type="GO" id="GO:0005504">
    <property type="term" value="F:fatty acid binding"/>
    <property type="evidence" value="ECO:0000314"/>
    <property type="project" value="UniProtKB"/>
</dbReference>
<dbReference type="GO" id="GO:0042803">
    <property type="term" value="F:protein homodimerization activity"/>
    <property type="evidence" value="ECO:0000314"/>
    <property type="project" value="UniProtKB"/>
</dbReference>
<dbReference type="GO" id="GO:0043565">
    <property type="term" value="F:sequence-specific DNA binding"/>
    <property type="evidence" value="ECO:0007669"/>
    <property type="project" value="InterPro"/>
</dbReference>
<dbReference type="Gene3D" id="1.10.10.60">
    <property type="entry name" value="Homeodomain-like"/>
    <property type="match status" value="1"/>
</dbReference>
<dbReference type="InterPro" id="IPR009057">
    <property type="entry name" value="Homeodomain-like_sf"/>
</dbReference>
<dbReference type="InterPro" id="IPR018060">
    <property type="entry name" value="HTH_AraC"/>
</dbReference>
<dbReference type="InterPro" id="IPR018062">
    <property type="entry name" value="HTH_AraC-typ_CS"/>
</dbReference>
<dbReference type="InterPro" id="IPR020449">
    <property type="entry name" value="Tscrpt_reg_AraC-type_HTH"/>
</dbReference>
<dbReference type="PANTHER" id="PTHR43280">
    <property type="entry name" value="ARAC-FAMILY TRANSCRIPTIONAL REGULATOR"/>
    <property type="match status" value="1"/>
</dbReference>
<dbReference type="PANTHER" id="PTHR43280:SF11">
    <property type="entry name" value="RCS-SPECIFIC HTH-TYPE TRANSCRIPTIONAL ACTIVATOR RCLR"/>
    <property type="match status" value="1"/>
</dbReference>
<dbReference type="Pfam" id="PF12833">
    <property type="entry name" value="HTH_18"/>
    <property type="match status" value="1"/>
</dbReference>
<dbReference type="PRINTS" id="PR00032">
    <property type="entry name" value="HTHARAC"/>
</dbReference>
<dbReference type="SMART" id="SM00342">
    <property type="entry name" value="HTH_ARAC"/>
    <property type="match status" value="1"/>
</dbReference>
<dbReference type="SUPFAM" id="SSF46689">
    <property type="entry name" value="Homeodomain-like"/>
    <property type="match status" value="1"/>
</dbReference>
<dbReference type="PROSITE" id="PS00041">
    <property type="entry name" value="HTH_ARAC_FAMILY_1"/>
    <property type="match status" value="1"/>
</dbReference>
<dbReference type="PROSITE" id="PS01124">
    <property type="entry name" value="HTH_ARAC_FAMILY_2"/>
    <property type="match status" value="1"/>
</dbReference>